<keyword id="KW-0002">3D-structure</keyword>
<keyword id="KW-1185">Reference proteome</keyword>
<keyword id="KW-0687">Ribonucleoprotein</keyword>
<keyword id="KW-0689">Ribosomal protein</keyword>
<keyword id="KW-0694">RNA-binding</keyword>
<keyword id="KW-0699">rRNA-binding</keyword>
<accession>Q2FW17</accession>
<name>RL24_STAA8</name>
<evidence type="ECO:0000255" key="1">
    <source>
        <dbReference type="HAMAP-Rule" id="MF_01326"/>
    </source>
</evidence>
<evidence type="ECO:0000305" key="2"/>
<evidence type="ECO:0007829" key="3">
    <source>
        <dbReference type="PDB" id="4WFA"/>
    </source>
</evidence>
<evidence type="ECO:0007829" key="4">
    <source>
        <dbReference type="PDB" id="7ASM"/>
    </source>
</evidence>
<evidence type="ECO:0007829" key="5">
    <source>
        <dbReference type="PDB" id="7ASN"/>
    </source>
</evidence>
<feature type="chain" id="PRO_1000052318" description="Large ribosomal subunit protein uL24">
    <location>
        <begin position="1"/>
        <end position="105"/>
    </location>
</feature>
<feature type="strand" evidence="4">
    <location>
        <begin position="8"/>
        <end position="11"/>
    </location>
</feature>
<feature type="strand" evidence="3">
    <location>
        <begin position="12"/>
        <end position="14"/>
    </location>
</feature>
<feature type="turn" evidence="4">
    <location>
        <begin position="15"/>
        <end position="18"/>
    </location>
</feature>
<feature type="strand" evidence="4">
    <location>
        <begin position="22"/>
        <end position="25"/>
    </location>
</feature>
<feature type="turn" evidence="4">
    <location>
        <begin position="28"/>
        <end position="31"/>
    </location>
</feature>
<feature type="strand" evidence="4">
    <location>
        <begin position="32"/>
        <end position="35"/>
    </location>
</feature>
<feature type="strand" evidence="4">
    <location>
        <begin position="38"/>
        <end position="45"/>
    </location>
</feature>
<feature type="strand" evidence="5">
    <location>
        <begin position="49"/>
        <end position="51"/>
    </location>
</feature>
<feature type="strand" evidence="4">
    <location>
        <begin position="55"/>
        <end position="60"/>
    </location>
</feature>
<feature type="helix" evidence="4">
    <location>
        <begin position="65"/>
        <end position="67"/>
    </location>
</feature>
<feature type="strand" evidence="4">
    <location>
        <begin position="68"/>
        <end position="71"/>
    </location>
</feature>
<feature type="turn" evidence="4">
    <location>
        <begin position="73"/>
        <end position="75"/>
    </location>
</feature>
<feature type="strand" evidence="5">
    <location>
        <begin position="77"/>
        <end position="79"/>
    </location>
</feature>
<feature type="strand" evidence="4">
    <location>
        <begin position="82"/>
        <end position="86"/>
    </location>
</feature>
<feature type="strand" evidence="4">
    <location>
        <begin position="89"/>
        <end position="93"/>
    </location>
</feature>
<feature type="strand" evidence="4">
    <location>
        <begin position="95"/>
        <end position="99"/>
    </location>
</feature>
<sequence length="105" mass="11536">MHIKKGDNVKVIAGKDKGKEGKVIATLPKKDRVVVEGVNIMKKHQKPTQLNPEGGILETEAAIHVSNVQLLDPKTNEPTRVGYKFVDGKKVRIAKKSGEEIKSNN</sequence>
<protein>
    <recommendedName>
        <fullName evidence="1">Large ribosomal subunit protein uL24</fullName>
    </recommendedName>
    <alternativeName>
        <fullName evidence="2">50S ribosomal protein L24</fullName>
    </alternativeName>
</protein>
<dbReference type="EMBL" id="CP000253">
    <property type="protein sequence ID" value="ABD31519.1"/>
    <property type="molecule type" value="Genomic_DNA"/>
</dbReference>
<dbReference type="RefSeq" id="WP_000547687.1">
    <property type="nucleotide sequence ID" value="NZ_LS483365.1"/>
</dbReference>
<dbReference type="RefSeq" id="YP_500968.1">
    <property type="nucleotide sequence ID" value="NC_007795.1"/>
</dbReference>
<dbReference type="PDB" id="4WCE">
    <property type="method" value="X-ray"/>
    <property type="resolution" value="3.53 A"/>
    <property type="chains" value="R=1-105"/>
</dbReference>
<dbReference type="PDB" id="4WF9">
    <property type="method" value="X-ray"/>
    <property type="resolution" value="3.43 A"/>
    <property type="chains" value="R=1-105"/>
</dbReference>
<dbReference type="PDB" id="4WFA">
    <property type="method" value="X-ray"/>
    <property type="resolution" value="3.39 A"/>
    <property type="chains" value="R=1-105"/>
</dbReference>
<dbReference type="PDB" id="4WFB">
    <property type="method" value="X-ray"/>
    <property type="resolution" value="3.43 A"/>
    <property type="chains" value="R=1-105"/>
</dbReference>
<dbReference type="PDB" id="5HKV">
    <property type="method" value="X-ray"/>
    <property type="resolution" value="3.66 A"/>
    <property type="chains" value="R=1-105"/>
</dbReference>
<dbReference type="PDB" id="5HL7">
    <property type="method" value="X-ray"/>
    <property type="resolution" value="3.55 A"/>
    <property type="chains" value="R=1-105"/>
</dbReference>
<dbReference type="PDB" id="5LI0">
    <property type="method" value="EM"/>
    <property type="resolution" value="3.80 A"/>
    <property type="chains" value="X=3-102"/>
</dbReference>
<dbReference type="PDB" id="5ND8">
    <property type="method" value="EM"/>
    <property type="resolution" value="3.70 A"/>
    <property type="chains" value="X=1-105"/>
</dbReference>
<dbReference type="PDB" id="5ND9">
    <property type="method" value="EM"/>
    <property type="resolution" value="3.70 A"/>
    <property type="chains" value="X=1-105"/>
</dbReference>
<dbReference type="PDB" id="5NRG">
    <property type="method" value="X-ray"/>
    <property type="resolution" value="3.44 A"/>
    <property type="chains" value="R=1-105"/>
</dbReference>
<dbReference type="PDB" id="5TCU">
    <property type="method" value="EM"/>
    <property type="resolution" value="3.90 A"/>
    <property type="chains" value="L7=2-104"/>
</dbReference>
<dbReference type="PDB" id="6DDD">
    <property type="method" value="EM"/>
    <property type="resolution" value="3.10 A"/>
    <property type="chains" value="G=1-105"/>
</dbReference>
<dbReference type="PDB" id="6DDG">
    <property type="method" value="EM"/>
    <property type="resolution" value="3.10 A"/>
    <property type="chains" value="G=1-105"/>
</dbReference>
<dbReference type="PDB" id="6HMA">
    <property type="method" value="EM"/>
    <property type="resolution" value="2.65 A"/>
    <property type="chains" value="S=2-104"/>
</dbReference>
<dbReference type="PDB" id="6SJ6">
    <property type="method" value="EM"/>
    <property type="resolution" value="3.23 A"/>
    <property type="chains" value="X=1-105"/>
</dbReference>
<dbReference type="PDB" id="6WQN">
    <property type="method" value="EM"/>
    <property type="resolution" value="2.90 A"/>
    <property type="chains" value="G=1-105"/>
</dbReference>
<dbReference type="PDB" id="6WQQ">
    <property type="method" value="EM"/>
    <property type="resolution" value="3.10 A"/>
    <property type="chains" value="G=1-105"/>
</dbReference>
<dbReference type="PDB" id="6WRS">
    <property type="method" value="EM"/>
    <property type="resolution" value="3.20 A"/>
    <property type="chains" value="G=1-105"/>
</dbReference>
<dbReference type="PDB" id="6WRU">
    <property type="method" value="EM"/>
    <property type="resolution" value="3.10 A"/>
    <property type="chains" value="G=1-105"/>
</dbReference>
<dbReference type="PDB" id="6YEF">
    <property type="method" value="EM"/>
    <property type="resolution" value="3.20 A"/>
    <property type="chains" value="X=1-105"/>
</dbReference>
<dbReference type="PDB" id="7ASM">
    <property type="method" value="EM"/>
    <property type="resolution" value="2.48 A"/>
    <property type="chains" value="S=1-104"/>
</dbReference>
<dbReference type="PDB" id="7ASN">
    <property type="method" value="EM"/>
    <property type="resolution" value="2.73 A"/>
    <property type="chains" value="S=2-104"/>
</dbReference>
<dbReference type="PDB" id="7NHL">
    <property type="method" value="EM"/>
    <property type="resolution" value="3.10 A"/>
    <property type="chains" value="X=1-105"/>
</dbReference>
<dbReference type="PDB" id="7NHM">
    <property type="method" value="EM"/>
    <property type="resolution" value="3.10 A"/>
    <property type="chains" value="X=1-105"/>
</dbReference>
<dbReference type="PDB" id="7TTU">
    <property type="method" value="EM"/>
    <property type="resolution" value="3.00 A"/>
    <property type="chains" value="G=1-105"/>
</dbReference>
<dbReference type="PDB" id="7TTW">
    <property type="method" value="EM"/>
    <property type="resolution" value="2.90 A"/>
    <property type="chains" value="G=1-105"/>
</dbReference>
<dbReference type="PDB" id="8P2F">
    <property type="method" value="EM"/>
    <property type="resolution" value="2.44 A"/>
    <property type="chains" value="X=1-105"/>
</dbReference>
<dbReference type="PDB" id="8P2G">
    <property type="method" value="EM"/>
    <property type="resolution" value="2.02 A"/>
    <property type="chains" value="X=1-105"/>
</dbReference>
<dbReference type="PDB" id="8P2H">
    <property type="method" value="EM"/>
    <property type="resolution" value="2.49 A"/>
    <property type="chains" value="X=1-105"/>
</dbReference>
<dbReference type="PDBsum" id="4WCE"/>
<dbReference type="PDBsum" id="4WF9"/>
<dbReference type="PDBsum" id="4WFA"/>
<dbReference type="PDBsum" id="4WFB"/>
<dbReference type="PDBsum" id="5HKV"/>
<dbReference type="PDBsum" id="5HL7"/>
<dbReference type="PDBsum" id="5LI0"/>
<dbReference type="PDBsum" id="5ND8"/>
<dbReference type="PDBsum" id="5ND9"/>
<dbReference type="PDBsum" id="5NRG"/>
<dbReference type="PDBsum" id="5TCU"/>
<dbReference type="PDBsum" id="6DDD"/>
<dbReference type="PDBsum" id="6DDG"/>
<dbReference type="PDBsum" id="6HMA"/>
<dbReference type="PDBsum" id="6SJ6"/>
<dbReference type="PDBsum" id="6WQN"/>
<dbReference type="PDBsum" id="6WQQ"/>
<dbReference type="PDBsum" id="6WRS"/>
<dbReference type="PDBsum" id="6WRU"/>
<dbReference type="PDBsum" id="6YEF"/>
<dbReference type="PDBsum" id="7ASM"/>
<dbReference type="PDBsum" id="7ASN"/>
<dbReference type="PDBsum" id="7NHL"/>
<dbReference type="PDBsum" id="7NHM"/>
<dbReference type="PDBsum" id="7TTU"/>
<dbReference type="PDBsum" id="7TTW"/>
<dbReference type="PDBsum" id="8P2F"/>
<dbReference type="PDBsum" id="8P2G"/>
<dbReference type="PDBsum" id="8P2H"/>
<dbReference type="EMDB" id="EMD-10212"/>
<dbReference type="EMDB" id="EMD-10791"/>
<dbReference type="EMDB" id="EMD-12332"/>
<dbReference type="EMDB" id="EMD-17363"/>
<dbReference type="EMDB" id="EMD-17364"/>
<dbReference type="EMDB" id="EMD-17365"/>
<dbReference type="EMDB" id="EMD-3624"/>
<dbReference type="EMDB" id="EMD-3625"/>
<dbReference type="EMDB" id="EMD-4050"/>
<dbReference type="EMDB" id="EMD-8402"/>
<dbReference type="SMR" id="Q2FW17"/>
<dbReference type="IntAct" id="Q2FW17">
    <property type="interactions" value="1"/>
</dbReference>
<dbReference type="STRING" id="93061.SAOUHSC_02501"/>
<dbReference type="PaxDb" id="1280-SAXN108_2488"/>
<dbReference type="GeneID" id="3920877"/>
<dbReference type="KEGG" id="sao:SAOUHSC_02501"/>
<dbReference type="PATRIC" id="fig|93061.5.peg.2256"/>
<dbReference type="eggNOG" id="COG0198">
    <property type="taxonomic scope" value="Bacteria"/>
</dbReference>
<dbReference type="HOGENOM" id="CLU_093315_2_0_9"/>
<dbReference type="OrthoDB" id="9807419at2"/>
<dbReference type="EvolutionaryTrace" id="Q2FW17"/>
<dbReference type="PRO" id="PR:Q2FW17"/>
<dbReference type="Proteomes" id="UP000008816">
    <property type="component" value="Chromosome"/>
</dbReference>
<dbReference type="GO" id="GO:0022625">
    <property type="term" value="C:cytosolic large ribosomal subunit"/>
    <property type="evidence" value="ECO:0000318"/>
    <property type="project" value="GO_Central"/>
</dbReference>
<dbReference type="GO" id="GO:0019843">
    <property type="term" value="F:rRNA binding"/>
    <property type="evidence" value="ECO:0007669"/>
    <property type="project" value="UniProtKB-UniRule"/>
</dbReference>
<dbReference type="GO" id="GO:0003735">
    <property type="term" value="F:structural constituent of ribosome"/>
    <property type="evidence" value="ECO:0007669"/>
    <property type="project" value="InterPro"/>
</dbReference>
<dbReference type="GO" id="GO:0006412">
    <property type="term" value="P:translation"/>
    <property type="evidence" value="ECO:0000318"/>
    <property type="project" value="GO_Central"/>
</dbReference>
<dbReference type="CDD" id="cd06089">
    <property type="entry name" value="KOW_RPL26"/>
    <property type="match status" value="1"/>
</dbReference>
<dbReference type="FunFam" id="2.30.30.30:FF:000004">
    <property type="entry name" value="50S ribosomal protein L24"/>
    <property type="match status" value="1"/>
</dbReference>
<dbReference type="Gene3D" id="2.30.30.30">
    <property type="match status" value="1"/>
</dbReference>
<dbReference type="HAMAP" id="MF_01326_B">
    <property type="entry name" value="Ribosomal_uL24_B"/>
    <property type="match status" value="1"/>
</dbReference>
<dbReference type="InterPro" id="IPR005824">
    <property type="entry name" value="KOW"/>
</dbReference>
<dbReference type="InterPro" id="IPR014722">
    <property type="entry name" value="Rib_uL2_dom2"/>
</dbReference>
<dbReference type="InterPro" id="IPR003256">
    <property type="entry name" value="Ribosomal_uL24"/>
</dbReference>
<dbReference type="InterPro" id="IPR005825">
    <property type="entry name" value="Ribosomal_uL24_CS"/>
</dbReference>
<dbReference type="InterPro" id="IPR041988">
    <property type="entry name" value="Ribosomal_uL24_KOW"/>
</dbReference>
<dbReference type="InterPro" id="IPR008991">
    <property type="entry name" value="Translation_prot_SH3-like_sf"/>
</dbReference>
<dbReference type="NCBIfam" id="TIGR01079">
    <property type="entry name" value="rplX_bact"/>
    <property type="match status" value="1"/>
</dbReference>
<dbReference type="PANTHER" id="PTHR12903">
    <property type="entry name" value="MITOCHONDRIAL RIBOSOMAL PROTEIN L24"/>
    <property type="match status" value="1"/>
</dbReference>
<dbReference type="Pfam" id="PF00467">
    <property type="entry name" value="KOW"/>
    <property type="match status" value="1"/>
</dbReference>
<dbReference type="Pfam" id="PF17136">
    <property type="entry name" value="ribosomal_L24"/>
    <property type="match status" value="1"/>
</dbReference>
<dbReference type="SMART" id="SM00739">
    <property type="entry name" value="KOW"/>
    <property type="match status" value="1"/>
</dbReference>
<dbReference type="SUPFAM" id="SSF50104">
    <property type="entry name" value="Translation proteins SH3-like domain"/>
    <property type="match status" value="1"/>
</dbReference>
<dbReference type="PROSITE" id="PS01108">
    <property type="entry name" value="RIBOSOMAL_L24"/>
    <property type="match status" value="1"/>
</dbReference>
<organism>
    <name type="scientific">Staphylococcus aureus (strain NCTC 8325 / PS 47)</name>
    <dbReference type="NCBI Taxonomy" id="93061"/>
    <lineage>
        <taxon>Bacteria</taxon>
        <taxon>Bacillati</taxon>
        <taxon>Bacillota</taxon>
        <taxon>Bacilli</taxon>
        <taxon>Bacillales</taxon>
        <taxon>Staphylococcaceae</taxon>
        <taxon>Staphylococcus</taxon>
    </lineage>
</organism>
<proteinExistence type="evidence at protein level"/>
<comment type="function">
    <text evidence="1">One of two assembly initiator proteins, it binds directly to the 5'-end of the 23S rRNA, where it nucleates assembly of the 50S subunit.</text>
</comment>
<comment type="function">
    <text evidence="1">One of the proteins that surrounds the polypeptide exit tunnel on the outside of the subunit.</text>
</comment>
<comment type="subunit">
    <text evidence="1">Part of the 50S ribosomal subunit.</text>
</comment>
<comment type="similarity">
    <text evidence="1">Belongs to the universal ribosomal protein uL24 family.</text>
</comment>
<reference key="1">
    <citation type="book" date="2006" name="Gram positive pathogens, 2nd edition">
        <title>The Staphylococcus aureus NCTC 8325 genome.</title>
        <editorList>
            <person name="Fischetti V."/>
            <person name="Novick R."/>
            <person name="Ferretti J."/>
            <person name="Portnoy D."/>
            <person name="Rood J."/>
        </editorList>
        <authorList>
            <person name="Gillaspy A.F."/>
            <person name="Worrell V."/>
            <person name="Orvis J."/>
            <person name="Roe B.A."/>
            <person name="Dyer D.W."/>
            <person name="Iandolo J.J."/>
        </authorList>
    </citation>
    <scope>NUCLEOTIDE SEQUENCE [LARGE SCALE GENOMIC DNA]</scope>
    <source>
        <strain>NCTC 8325 / PS 47</strain>
    </source>
</reference>
<gene>
    <name evidence="1" type="primary">rplX</name>
    <name type="ordered locus">SAOUHSC_02501</name>
</gene>